<protein>
    <recommendedName>
        <fullName evidence="3">Toxin ICK-16</fullName>
    </recommendedName>
</protein>
<evidence type="ECO:0000250" key="1">
    <source>
        <dbReference type="UniProtKB" id="A0A452CSQ9"/>
    </source>
</evidence>
<evidence type="ECO:0000255" key="2"/>
<evidence type="ECO:0000303" key="3">
    <source>
    </source>
</evidence>
<evidence type="ECO:0000305" key="4"/>
<evidence type="ECO:0000305" key="5">
    <source>
    </source>
</evidence>
<comment type="function">
    <text evidence="4">Probable neurotoxin with ion channel impairing activity.</text>
</comment>
<comment type="subcellular location">
    <subcellularLocation>
        <location evidence="5">Secreted</location>
    </subcellularLocation>
</comment>
<comment type="tissue specificity">
    <text evidence="5">Expressed by the venom gland.</text>
</comment>
<comment type="domain">
    <text evidence="1">The presence of a 'disulfide through disulfide knot' structurally defines this protein as a knottin.</text>
</comment>
<comment type="similarity">
    <text evidence="4">Belongs to the neurotoxin 21 family.</text>
</comment>
<sequence>MKPIVSILLFCALAVVIMGHPMNQGYGIPHDVVKLPNGQWCKTPGDDCSKSSECCKAKDTVTYSSGCSQEWSGQLGGFVKLCHICNVESSMC</sequence>
<name>TX21G_TRILK</name>
<dbReference type="EMBL" id="GAQE01000019">
    <property type="protein sequence ID" value="JAB84535.1"/>
    <property type="molecule type" value="Transcribed_RNA"/>
</dbReference>
<dbReference type="SMR" id="W4VRV1"/>
<dbReference type="ArachnoServer" id="AS001752">
    <property type="toxin name" value="U6-barytoxin-Tl1a"/>
</dbReference>
<dbReference type="GO" id="GO:0005576">
    <property type="term" value="C:extracellular region"/>
    <property type="evidence" value="ECO:0007669"/>
    <property type="project" value="UniProtKB-SubCell"/>
</dbReference>
<dbReference type="GO" id="GO:0099106">
    <property type="term" value="F:ion channel regulator activity"/>
    <property type="evidence" value="ECO:0007669"/>
    <property type="project" value="UniProtKB-KW"/>
</dbReference>
<dbReference type="GO" id="GO:0090729">
    <property type="term" value="F:toxin activity"/>
    <property type="evidence" value="ECO:0007669"/>
    <property type="project" value="UniProtKB-KW"/>
</dbReference>
<dbReference type="InterPro" id="IPR035311">
    <property type="entry name" value="Cys_Knot_tox"/>
</dbReference>
<dbReference type="Pfam" id="PF17486">
    <property type="entry name" value="Cys_Knot_tox"/>
    <property type="match status" value="1"/>
</dbReference>
<feature type="signal peptide" evidence="2">
    <location>
        <begin position="1"/>
        <end position="19"/>
    </location>
</feature>
<feature type="chain" id="PRO_0000429223" description="Toxin ICK-16">
    <location>
        <begin position="20"/>
        <end position="92"/>
    </location>
</feature>
<feature type="disulfide bond" evidence="1">
    <location>
        <begin position="41"/>
        <end position="55"/>
    </location>
</feature>
<feature type="disulfide bond" evidence="1">
    <location>
        <begin position="48"/>
        <end position="67"/>
    </location>
</feature>
<feature type="disulfide bond" evidence="1">
    <location>
        <begin position="54"/>
        <end position="82"/>
    </location>
</feature>
<feature type="disulfide bond" evidence="1">
    <location>
        <begin position="85"/>
        <end position="92"/>
    </location>
</feature>
<accession>W4VRV1</accession>
<keyword id="KW-1015">Disulfide bond</keyword>
<keyword id="KW-0872">Ion channel impairing toxin</keyword>
<keyword id="KW-0960">Knottin</keyword>
<keyword id="KW-0528">Neurotoxin</keyword>
<keyword id="KW-0964">Secreted</keyword>
<keyword id="KW-0732">Signal</keyword>
<keyword id="KW-0800">Toxin</keyword>
<reference key="1">
    <citation type="journal article" date="2013" name="Toxins">
        <title>A proteomics and transcriptomics investigation of the venom from the barychelid spider Trittame loki (brush-foot trapdoor).</title>
        <authorList>
            <person name="Undheim E.A."/>
            <person name="Sunagar K."/>
            <person name="Herzig V."/>
            <person name="Kely L."/>
            <person name="Low D.H."/>
            <person name="Jackson T.N."/>
            <person name="Jones A."/>
            <person name="Kurniawan N."/>
            <person name="King G.F."/>
            <person name="Ali S.A."/>
            <person name="Antunes A."/>
            <person name="Ruder T."/>
            <person name="Fry B.G."/>
        </authorList>
    </citation>
    <scope>NUCLEOTIDE SEQUENCE [MRNA]</scope>
    <source>
        <tissue>Venom gland</tissue>
    </source>
</reference>
<organism>
    <name type="scientific">Trittame loki</name>
    <name type="common">Brush-footed trapdoor spider</name>
    <dbReference type="NCBI Taxonomy" id="1295018"/>
    <lineage>
        <taxon>Eukaryota</taxon>
        <taxon>Metazoa</taxon>
        <taxon>Ecdysozoa</taxon>
        <taxon>Arthropoda</taxon>
        <taxon>Chelicerata</taxon>
        <taxon>Arachnida</taxon>
        <taxon>Araneae</taxon>
        <taxon>Mygalomorphae</taxon>
        <taxon>Barychelidae</taxon>
        <taxon>Trittame</taxon>
    </lineage>
</organism>
<proteinExistence type="inferred from homology"/>